<protein>
    <recommendedName>
        <fullName evidence="1">Translation initiation factor IF-3</fullName>
    </recommendedName>
</protein>
<accession>Q5WEI6</accession>
<name>IF3_SHOC1</name>
<sequence length="167" mass="19093">MLVNEGIRAREVRLVGANGDQIGVKSKHEALEMAQRVNLDLVCVAPNAKPPVCRIMDYGKYRYEQQKKEKEARKNQKVITIKEVRLSPTIEANDFNTKLRNARKFLEKGDKVKASIRFRGRAITHSQIGRDVLERLAKECEDIATIEARPKMEGRSMFLVMAPKTEK</sequence>
<organism>
    <name type="scientific">Shouchella clausii (strain KSM-K16)</name>
    <name type="common">Alkalihalobacillus clausii</name>
    <dbReference type="NCBI Taxonomy" id="66692"/>
    <lineage>
        <taxon>Bacteria</taxon>
        <taxon>Bacillati</taxon>
        <taxon>Bacillota</taxon>
        <taxon>Bacilli</taxon>
        <taxon>Bacillales</taxon>
        <taxon>Bacillaceae</taxon>
        <taxon>Shouchella</taxon>
    </lineage>
</organism>
<proteinExistence type="inferred from homology"/>
<dbReference type="EMBL" id="AP006627">
    <property type="protein sequence ID" value="BAD65224.1"/>
    <property type="molecule type" value="Genomic_DNA"/>
</dbReference>
<dbReference type="RefSeq" id="WP_011247532.1">
    <property type="nucleotide sequence ID" value="NC_006582.1"/>
</dbReference>
<dbReference type="SMR" id="Q5WEI6"/>
<dbReference type="STRING" id="66692.ABC2689"/>
<dbReference type="KEGG" id="bcl:ABC2689"/>
<dbReference type="eggNOG" id="COG0290">
    <property type="taxonomic scope" value="Bacteria"/>
</dbReference>
<dbReference type="HOGENOM" id="CLU_054919_3_2_9"/>
<dbReference type="OrthoDB" id="9806014at2"/>
<dbReference type="Proteomes" id="UP000001168">
    <property type="component" value="Chromosome"/>
</dbReference>
<dbReference type="GO" id="GO:0005829">
    <property type="term" value="C:cytosol"/>
    <property type="evidence" value="ECO:0007669"/>
    <property type="project" value="TreeGrafter"/>
</dbReference>
<dbReference type="GO" id="GO:0016020">
    <property type="term" value="C:membrane"/>
    <property type="evidence" value="ECO:0007669"/>
    <property type="project" value="TreeGrafter"/>
</dbReference>
<dbReference type="GO" id="GO:0043022">
    <property type="term" value="F:ribosome binding"/>
    <property type="evidence" value="ECO:0007669"/>
    <property type="project" value="TreeGrafter"/>
</dbReference>
<dbReference type="GO" id="GO:0003743">
    <property type="term" value="F:translation initiation factor activity"/>
    <property type="evidence" value="ECO:0007669"/>
    <property type="project" value="UniProtKB-UniRule"/>
</dbReference>
<dbReference type="GO" id="GO:0032790">
    <property type="term" value="P:ribosome disassembly"/>
    <property type="evidence" value="ECO:0007669"/>
    <property type="project" value="TreeGrafter"/>
</dbReference>
<dbReference type="FunFam" id="3.10.20.80:FF:000001">
    <property type="entry name" value="Translation initiation factor IF-3"/>
    <property type="match status" value="1"/>
</dbReference>
<dbReference type="FunFam" id="3.30.110.10:FF:000001">
    <property type="entry name" value="Translation initiation factor IF-3"/>
    <property type="match status" value="1"/>
</dbReference>
<dbReference type="Gene3D" id="3.30.110.10">
    <property type="entry name" value="Translation initiation factor 3 (IF-3), C-terminal domain"/>
    <property type="match status" value="1"/>
</dbReference>
<dbReference type="Gene3D" id="3.10.20.80">
    <property type="entry name" value="Translation initiation factor 3 (IF-3), N-terminal domain"/>
    <property type="match status" value="1"/>
</dbReference>
<dbReference type="HAMAP" id="MF_00080">
    <property type="entry name" value="IF_3"/>
    <property type="match status" value="1"/>
</dbReference>
<dbReference type="InterPro" id="IPR036788">
    <property type="entry name" value="T_IF-3_C_sf"/>
</dbReference>
<dbReference type="InterPro" id="IPR036787">
    <property type="entry name" value="T_IF-3_N_sf"/>
</dbReference>
<dbReference type="InterPro" id="IPR019813">
    <property type="entry name" value="Translation_initiation_fac3_CS"/>
</dbReference>
<dbReference type="InterPro" id="IPR001288">
    <property type="entry name" value="Translation_initiation_fac_3"/>
</dbReference>
<dbReference type="InterPro" id="IPR019815">
    <property type="entry name" value="Translation_initiation_fac_3_C"/>
</dbReference>
<dbReference type="InterPro" id="IPR019814">
    <property type="entry name" value="Translation_initiation_fac_3_N"/>
</dbReference>
<dbReference type="NCBIfam" id="TIGR00168">
    <property type="entry name" value="infC"/>
    <property type="match status" value="1"/>
</dbReference>
<dbReference type="PANTHER" id="PTHR10938">
    <property type="entry name" value="TRANSLATION INITIATION FACTOR IF-3"/>
    <property type="match status" value="1"/>
</dbReference>
<dbReference type="PANTHER" id="PTHR10938:SF0">
    <property type="entry name" value="TRANSLATION INITIATION FACTOR IF-3, MITOCHONDRIAL"/>
    <property type="match status" value="1"/>
</dbReference>
<dbReference type="Pfam" id="PF00707">
    <property type="entry name" value="IF3_C"/>
    <property type="match status" value="1"/>
</dbReference>
<dbReference type="Pfam" id="PF05198">
    <property type="entry name" value="IF3_N"/>
    <property type="match status" value="1"/>
</dbReference>
<dbReference type="SUPFAM" id="SSF55200">
    <property type="entry name" value="Translation initiation factor IF3, C-terminal domain"/>
    <property type="match status" value="1"/>
</dbReference>
<dbReference type="SUPFAM" id="SSF54364">
    <property type="entry name" value="Translation initiation factor IF3, N-terminal domain"/>
    <property type="match status" value="1"/>
</dbReference>
<dbReference type="PROSITE" id="PS00938">
    <property type="entry name" value="IF3"/>
    <property type="match status" value="1"/>
</dbReference>
<gene>
    <name evidence="1" type="primary">infC</name>
    <name type="ordered locus">ABC2689</name>
</gene>
<evidence type="ECO:0000255" key="1">
    <source>
        <dbReference type="HAMAP-Rule" id="MF_00080"/>
    </source>
</evidence>
<keyword id="KW-0963">Cytoplasm</keyword>
<keyword id="KW-0396">Initiation factor</keyword>
<keyword id="KW-0648">Protein biosynthesis</keyword>
<keyword id="KW-1185">Reference proteome</keyword>
<feature type="chain" id="PRO_0000177480" description="Translation initiation factor IF-3">
    <location>
        <begin position="1"/>
        <end position="167"/>
    </location>
</feature>
<comment type="function">
    <text evidence="1">IF-3 binds to the 30S ribosomal subunit and shifts the equilibrium between 70S ribosomes and their 50S and 30S subunits in favor of the free subunits, thus enhancing the availability of 30S subunits on which protein synthesis initiation begins.</text>
</comment>
<comment type="subunit">
    <text evidence="1">Monomer.</text>
</comment>
<comment type="subcellular location">
    <subcellularLocation>
        <location evidence="1">Cytoplasm</location>
    </subcellularLocation>
</comment>
<comment type="similarity">
    <text evidence="1">Belongs to the IF-3 family.</text>
</comment>
<reference key="1">
    <citation type="submission" date="2003-10" db="EMBL/GenBank/DDBJ databases">
        <title>The complete genome sequence of the alkaliphilic Bacillus clausii KSM-K16.</title>
        <authorList>
            <person name="Takaki Y."/>
            <person name="Kageyama Y."/>
            <person name="Shimamura S."/>
            <person name="Suzuki H."/>
            <person name="Nishi S."/>
            <person name="Hatada Y."/>
            <person name="Kawai S."/>
            <person name="Ito S."/>
            <person name="Horikoshi K."/>
        </authorList>
    </citation>
    <scope>NUCLEOTIDE SEQUENCE [LARGE SCALE GENOMIC DNA]</scope>
    <source>
        <strain>KSM-K16</strain>
    </source>
</reference>